<protein>
    <recommendedName>
        <fullName evidence="1">Small heat shock protein IbpA</fullName>
    </recommendedName>
    <alternativeName>
        <fullName evidence="1">16 kDa heat shock protein A</fullName>
    </alternativeName>
</protein>
<sequence length="137" mass="15750">MRNFDLSPLYRSAIGFDRLFNLLENNQSQSNGGYPPYNVELVDENHYRIAIAVAGFAESELEITAQDNLLVVKGAHADEQKERTYLYQGIAERNFERKFQLAENIHVRGANLVNGLLYIELERVIPEANKPRRIEIN</sequence>
<reference key="1">
    <citation type="submission" date="2007-11" db="EMBL/GenBank/DDBJ databases">
        <authorList>
            <consortium name="The Salmonella enterica serovar Paratyphi B Genome Sequencing Project"/>
            <person name="McClelland M."/>
            <person name="Sanderson E.K."/>
            <person name="Porwollik S."/>
            <person name="Spieth J."/>
            <person name="Clifton W.S."/>
            <person name="Fulton R."/>
            <person name="Cordes M."/>
            <person name="Wollam A."/>
            <person name="Shah N."/>
            <person name="Pepin K."/>
            <person name="Bhonagiri V."/>
            <person name="Nash W."/>
            <person name="Johnson M."/>
            <person name="Thiruvilangam P."/>
            <person name="Wilson R."/>
        </authorList>
    </citation>
    <scope>NUCLEOTIDE SEQUENCE [LARGE SCALE GENOMIC DNA]</scope>
    <source>
        <strain>ATCC BAA-1250 / SPB7</strain>
    </source>
</reference>
<gene>
    <name evidence="1" type="primary">ibpA</name>
    <name type="ordered locus">SPAB_04743</name>
</gene>
<feature type="chain" id="PRO_1000088538" description="Small heat shock protein IbpA">
    <location>
        <begin position="1"/>
        <end position="137"/>
    </location>
</feature>
<feature type="domain" description="sHSP" evidence="2">
    <location>
        <begin position="28"/>
        <end position="137"/>
    </location>
</feature>
<dbReference type="EMBL" id="CP000886">
    <property type="protein sequence ID" value="ABX70054.1"/>
    <property type="molecule type" value="Genomic_DNA"/>
</dbReference>
<dbReference type="RefSeq" id="WP_001532742.1">
    <property type="nucleotide sequence ID" value="NC_010102.1"/>
</dbReference>
<dbReference type="SMR" id="A9MWJ7"/>
<dbReference type="GeneID" id="84234411"/>
<dbReference type="KEGG" id="spq:SPAB_04743"/>
<dbReference type="PATRIC" id="fig|1016998.12.peg.4461"/>
<dbReference type="HOGENOM" id="CLU_046737_4_2_6"/>
<dbReference type="BioCyc" id="SENT1016998:SPAB_RS19245-MONOMER"/>
<dbReference type="Proteomes" id="UP000008556">
    <property type="component" value="Chromosome"/>
</dbReference>
<dbReference type="GO" id="GO:0005737">
    <property type="term" value="C:cytoplasm"/>
    <property type="evidence" value="ECO:0007669"/>
    <property type="project" value="UniProtKB-SubCell"/>
</dbReference>
<dbReference type="GO" id="GO:0050821">
    <property type="term" value="P:protein stabilization"/>
    <property type="evidence" value="ECO:0007669"/>
    <property type="project" value="UniProtKB-UniRule"/>
</dbReference>
<dbReference type="CDD" id="cd06470">
    <property type="entry name" value="ACD_IbpA-B_like"/>
    <property type="match status" value="1"/>
</dbReference>
<dbReference type="FunFam" id="2.60.40.790:FF:000002">
    <property type="entry name" value="Small heat shock protein IbpA"/>
    <property type="match status" value="1"/>
</dbReference>
<dbReference type="Gene3D" id="2.60.40.790">
    <property type="match status" value="1"/>
</dbReference>
<dbReference type="HAMAP" id="MF_02000">
    <property type="entry name" value="HSP20_IbpA"/>
    <property type="match status" value="1"/>
</dbReference>
<dbReference type="InterPro" id="IPR002068">
    <property type="entry name" value="A-crystallin/Hsp20_dom"/>
</dbReference>
<dbReference type="InterPro" id="IPR037913">
    <property type="entry name" value="ACD_IbpA/B"/>
</dbReference>
<dbReference type="InterPro" id="IPR008978">
    <property type="entry name" value="HSP20-like_chaperone"/>
</dbReference>
<dbReference type="InterPro" id="IPR023728">
    <property type="entry name" value="HSP20_IbpA"/>
</dbReference>
<dbReference type="NCBIfam" id="NF008013">
    <property type="entry name" value="PRK10743.1"/>
    <property type="match status" value="1"/>
</dbReference>
<dbReference type="PANTHER" id="PTHR47062">
    <property type="match status" value="1"/>
</dbReference>
<dbReference type="PANTHER" id="PTHR47062:SF1">
    <property type="entry name" value="SMALL HEAT SHOCK PROTEIN IBPA"/>
    <property type="match status" value="1"/>
</dbReference>
<dbReference type="Pfam" id="PF00011">
    <property type="entry name" value="HSP20"/>
    <property type="match status" value="1"/>
</dbReference>
<dbReference type="SUPFAM" id="SSF49764">
    <property type="entry name" value="HSP20-like chaperones"/>
    <property type="match status" value="1"/>
</dbReference>
<dbReference type="PROSITE" id="PS01031">
    <property type="entry name" value="SHSP"/>
    <property type="match status" value="1"/>
</dbReference>
<accession>A9MWJ7</accession>
<organism>
    <name type="scientific">Salmonella paratyphi B (strain ATCC BAA-1250 / SPB7)</name>
    <dbReference type="NCBI Taxonomy" id="1016998"/>
    <lineage>
        <taxon>Bacteria</taxon>
        <taxon>Pseudomonadati</taxon>
        <taxon>Pseudomonadota</taxon>
        <taxon>Gammaproteobacteria</taxon>
        <taxon>Enterobacterales</taxon>
        <taxon>Enterobacteriaceae</taxon>
        <taxon>Salmonella</taxon>
    </lineage>
</organism>
<evidence type="ECO:0000255" key="1">
    <source>
        <dbReference type="HAMAP-Rule" id="MF_02000"/>
    </source>
</evidence>
<evidence type="ECO:0000255" key="2">
    <source>
        <dbReference type="PROSITE-ProRule" id="PRU00285"/>
    </source>
</evidence>
<keyword id="KW-0143">Chaperone</keyword>
<keyword id="KW-0963">Cytoplasm</keyword>
<keyword id="KW-0346">Stress response</keyword>
<name>IBPA_SALPB</name>
<comment type="function">
    <text evidence="1">Associates with aggregated proteins, together with IbpB, to stabilize and protect them from irreversible denaturation and extensive proteolysis during heat shock and oxidative stress. Aggregated proteins bound to the IbpAB complex are more efficiently refolded and reactivated by the ATP-dependent chaperone systems ClpB and DnaK/DnaJ/GrpE. Its activity is ATP-independent.</text>
</comment>
<comment type="subunit">
    <text evidence="1">Monomer. Forms homomultimers of about 100-150 subunits at optimal growth temperatures. Conformation changes to monomers at high temperatures or high ionic concentrations.</text>
</comment>
<comment type="subcellular location">
    <subcellularLocation>
        <location evidence="1">Cytoplasm</location>
    </subcellularLocation>
</comment>
<comment type="similarity">
    <text evidence="1 2">Belongs to the small heat shock protein (HSP20) family.</text>
</comment>
<proteinExistence type="inferred from homology"/>